<feature type="chain" id="PRO_0000229206" description="tRNA (guanine-N(7)-)-methyltransferase">
    <location>
        <begin position="1"/>
        <end position="227"/>
    </location>
</feature>
<feature type="active site" evidence="1">
    <location>
        <position position="135"/>
    </location>
</feature>
<feature type="binding site" evidence="2">
    <location>
        <position position="60"/>
    </location>
    <ligand>
        <name>S-adenosyl-L-methionine</name>
        <dbReference type="ChEBI" id="CHEBI:59789"/>
    </ligand>
</feature>
<feature type="binding site" evidence="2">
    <location>
        <position position="85"/>
    </location>
    <ligand>
        <name>S-adenosyl-L-methionine</name>
        <dbReference type="ChEBI" id="CHEBI:59789"/>
    </ligand>
</feature>
<feature type="binding site" evidence="2">
    <location>
        <position position="112"/>
    </location>
    <ligand>
        <name>S-adenosyl-L-methionine</name>
        <dbReference type="ChEBI" id="CHEBI:59789"/>
    </ligand>
</feature>
<feature type="binding site" evidence="2">
    <location>
        <position position="135"/>
    </location>
    <ligand>
        <name>S-adenosyl-L-methionine</name>
        <dbReference type="ChEBI" id="CHEBI:59789"/>
    </ligand>
</feature>
<feature type="binding site" evidence="2">
    <location>
        <position position="139"/>
    </location>
    <ligand>
        <name>substrate</name>
    </ligand>
</feature>
<feature type="binding site" evidence="2">
    <location>
        <position position="171"/>
    </location>
    <ligand>
        <name>substrate</name>
    </ligand>
</feature>
<feature type="binding site" evidence="2">
    <location>
        <begin position="206"/>
        <end position="209"/>
    </location>
    <ligand>
        <name>substrate</name>
    </ligand>
</feature>
<proteinExistence type="inferred from homology"/>
<comment type="function">
    <text evidence="2">Catalyzes the formation of N(7)-methylguanine at position 46 (m7G46) in tRNA.</text>
</comment>
<comment type="catalytic activity">
    <reaction evidence="2">
        <text>guanosine(46) in tRNA + S-adenosyl-L-methionine = N(7)-methylguanosine(46) in tRNA + S-adenosyl-L-homocysteine</text>
        <dbReference type="Rhea" id="RHEA:42708"/>
        <dbReference type="Rhea" id="RHEA-COMP:10188"/>
        <dbReference type="Rhea" id="RHEA-COMP:10189"/>
        <dbReference type="ChEBI" id="CHEBI:57856"/>
        <dbReference type="ChEBI" id="CHEBI:59789"/>
        <dbReference type="ChEBI" id="CHEBI:74269"/>
        <dbReference type="ChEBI" id="CHEBI:74480"/>
        <dbReference type="EC" id="2.1.1.33"/>
    </reaction>
</comment>
<comment type="pathway">
    <text evidence="2">tRNA modification; N(7)-methylguanine-tRNA biosynthesis.</text>
</comment>
<comment type="similarity">
    <text evidence="2">Belongs to the class I-like SAM-binding methyltransferase superfamily. TrmB family.</text>
</comment>
<evidence type="ECO:0000250" key="1"/>
<evidence type="ECO:0000255" key="2">
    <source>
        <dbReference type="HAMAP-Rule" id="MF_01057"/>
    </source>
</evidence>
<dbReference type="EC" id="2.1.1.33" evidence="2"/>
<dbReference type="EMBL" id="CP000116">
    <property type="protein sequence ID" value="AAZ98078.1"/>
    <property type="molecule type" value="Genomic_DNA"/>
</dbReference>
<dbReference type="RefSeq" id="WP_011312637.1">
    <property type="nucleotide sequence ID" value="NC_007404.1"/>
</dbReference>
<dbReference type="SMR" id="Q3SH11"/>
<dbReference type="STRING" id="292415.Tbd_2125"/>
<dbReference type="KEGG" id="tbd:Tbd_2125"/>
<dbReference type="eggNOG" id="COG0220">
    <property type="taxonomic scope" value="Bacteria"/>
</dbReference>
<dbReference type="HOGENOM" id="CLU_050910_0_1_4"/>
<dbReference type="OrthoDB" id="9802090at2"/>
<dbReference type="UniPathway" id="UPA00989"/>
<dbReference type="Proteomes" id="UP000008291">
    <property type="component" value="Chromosome"/>
</dbReference>
<dbReference type="GO" id="GO:0043527">
    <property type="term" value="C:tRNA methyltransferase complex"/>
    <property type="evidence" value="ECO:0007669"/>
    <property type="project" value="TreeGrafter"/>
</dbReference>
<dbReference type="GO" id="GO:0008176">
    <property type="term" value="F:tRNA (guanine(46)-N7)-methyltransferase activity"/>
    <property type="evidence" value="ECO:0007669"/>
    <property type="project" value="UniProtKB-UniRule"/>
</dbReference>
<dbReference type="CDD" id="cd02440">
    <property type="entry name" value="AdoMet_MTases"/>
    <property type="match status" value="1"/>
</dbReference>
<dbReference type="FunFam" id="3.40.50.150:FF:000035">
    <property type="entry name" value="tRNA (guanine-N(7)-)-methyltransferase"/>
    <property type="match status" value="1"/>
</dbReference>
<dbReference type="Gene3D" id="3.40.50.150">
    <property type="entry name" value="Vaccinia Virus protein VP39"/>
    <property type="match status" value="1"/>
</dbReference>
<dbReference type="HAMAP" id="MF_01057">
    <property type="entry name" value="tRNA_methyltr_TrmB"/>
    <property type="match status" value="1"/>
</dbReference>
<dbReference type="InterPro" id="IPR029063">
    <property type="entry name" value="SAM-dependent_MTases_sf"/>
</dbReference>
<dbReference type="InterPro" id="IPR003358">
    <property type="entry name" value="tRNA_(Gua-N-7)_MeTrfase_Trmb"/>
</dbReference>
<dbReference type="InterPro" id="IPR055361">
    <property type="entry name" value="tRNA_methyltr_TrmB_bact"/>
</dbReference>
<dbReference type="NCBIfam" id="TIGR00091">
    <property type="entry name" value="tRNA (guanosine(46)-N7)-methyltransferase TrmB"/>
    <property type="match status" value="1"/>
</dbReference>
<dbReference type="PANTHER" id="PTHR23417">
    <property type="entry name" value="3-DEOXY-D-MANNO-OCTULOSONIC-ACID TRANSFERASE/TRNA GUANINE-N 7 - -METHYLTRANSFERASE"/>
    <property type="match status" value="1"/>
</dbReference>
<dbReference type="PANTHER" id="PTHR23417:SF14">
    <property type="entry name" value="PENTACOTRIPEPTIDE-REPEAT REGION OF PRORP DOMAIN-CONTAINING PROTEIN"/>
    <property type="match status" value="1"/>
</dbReference>
<dbReference type="Pfam" id="PF02390">
    <property type="entry name" value="Methyltransf_4"/>
    <property type="match status" value="1"/>
</dbReference>
<dbReference type="SUPFAM" id="SSF53335">
    <property type="entry name" value="S-adenosyl-L-methionine-dependent methyltransferases"/>
    <property type="match status" value="1"/>
</dbReference>
<dbReference type="PROSITE" id="PS51625">
    <property type="entry name" value="SAM_MT_TRMB"/>
    <property type="match status" value="1"/>
</dbReference>
<reference key="1">
    <citation type="journal article" date="2006" name="J. Bacteriol.">
        <title>The genome sequence of the obligately chemolithoautotrophic, facultatively anaerobic bacterium Thiobacillus denitrificans.</title>
        <authorList>
            <person name="Beller H.R."/>
            <person name="Chain P.S."/>
            <person name="Letain T.E."/>
            <person name="Chakicherla A."/>
            <person name="Larimer F.W."/>
            <person name="Richardson P.M."/>
            <person name="Coleman M.A."/>
            <person name="Wood A.P."/>
            <person name="Kelly D.P."/>
        </authorList>
    </citation>
    <scope>NUCLEOTIDE SEQUENCE [LARGE SCALE GENOMIC DNA]</scope>
    <source>
        <strain>ATCC 25259 / T1</strain>
    </source>
</reference>
<protein>
    <recommendedName>
        <fullName evidence="2">tRNA (guanine-N(7)-)-methyltransferase</fullName>
        <ecNumber evidence="2">2.1.1.33</ecNumber>
    </recommendedName>
    <alternativeName>
        <fullName evidence="2">tRNA (guanine(46)-N(7))-methyltransferase</fullName>
    </alternativeName>
    <alternativeName>
        <fullName evidence="2">tRNA(m7G46)-methyltransferase</fullName>
    </alternativeName>
</protein>
<name>TRMB_THIDA</name>
<gene>
    <name evidence="2" type="primary">trmB</name>
    <name type="ordered locus">Tbd_2125</name>
</gene>
<organism>
    <name type="scientific">Thiobacillus denitrificans (strain ATCC 25259 / T1)</name>
    <dbReference type="NCBI Taxonomy" id="292415"/>
    <lineage>
        <taxon>Bacteria</taxon>
        <taxon>Pseudomonadati</taxon>
        <taxon>Pseudomonadota</taxon>
        <taxon>Betaproteobacteria</taxon>
        <taxon>Nitrosomonadales</taxon>
        <taxon>Thiobacillaceae</taxon>
        <taxon>Thiobacillus</taxon>
    </lineage>
</organism>
<accession>Q3SH11</accession>
<sequence>MTADGGARPRIRSYVLRAGRVGSGQARALVELGPRFVLPYQPELLDLDAVFARVAPRVLEIGFGMGEGLAETAASHPEIDYIGVEVHTPGVGALLKQLGERELGNVRVIQHDAVEVLTAMLAPATLAGIHIFFPDPWHKKRHHKRRLIQAPLVELLASRLAPGGYIHLATDWQDYAEQMLVVLEAEAQLENTAAAYVPRPDTRPLTKFEQRGIRLGHGVWDLVFRRR</sequence>
<keyword id="KW-0489">Methyltransferase</keyword>
<keyword id="KW-1185">Reference proteome</keyword>
<keyword id="KW-0949">S-adenosyl-L-methionine</keyword>
<keyword id="KW-0808">Transferase</keyword>
<keyword id="KW-0819">tRNA processing</keyword>